<evidence type="ECO:0000256" key="1">
    <source>
        <dbReference type="SAM" id="MobiDB-lite"/>
    </source>
</evidence>
<evidence type="ECO:0000269" key="2">
    <source>
    </source>
</evidence>
<evidence type="ECO:0000269" key="3">
    <source>
    </source>
</evidence>
<evidence type="ECO:0000269" key="4">
    <source>
    </source>
</evidence>
<evidence type="ECO:0000269" key="5">
    <source>
    </source>
</evidence>
<evidence type="ECO:0000269" key="6">
    <source>
    </source>
</evidence>
<proteinExistence type="evidence at protein level"/>
<dbReference type="EMBL" id="U19729">
    <property type="protein sequence ID" value="AAB82346.1"/>
    <property type="molecule type" value="Genomic_DNA"/>
</dbReference>
<dbReference type="EMBL" id="BK006945">
    <property type="protein sequence ID" value="DAA09695.1"/>
    <property type="molecule type" value="Genomic_DNA"/>
</dbReference>
<dbReference type="PIR" id="S55950">
    <property type="entry name" value="S55950"/>
</dbReference>
<dbReference type="RefSeq" id="NP_013498.3">
    <property type="nucleotide sequence ID" value="NM_001182282.3"/>
</dbReference>
<dbReference type="SMR" id="Q06032"/>
<dbReference type="BioGRID" id="31653">
    <property type="interactions" value="243"/>
</dbReference>
<dbReference type="ComplexPortal" id="CPX-1386">
    <property type="entry name" value="Synapsis initiation complex"/>
</dbReference>
<dbReference type="DIP" id="DIP-5875N"/>
<dbReference type="FunCoup" id="Q06032">
    <property type="interactions" value="44"/>
</dbReference>
<dbReference type="IntAct" id="Q06032">
    <property type="interactions" value="8"/>
</dbReference>
<dbReference type="STRING" id="4932.YLR394W"/>
<dbReference type="GlyGen" id="Q06032">
    <property type="glycosylation" value="1 site"/>
</dbReference>
<dbReference type="iPTMnet" id="Q06032"/>
<dbReference type="PaxDb" id="4932-YLR394W"/>
<dbReference type="PeptideAtlas" id="Q06032"/>
<dbReference type="EnsemblFungi" id="YLR394W_mRNA">
    <property type="protein sequence ID" value="YLR394W"/>
    <property type="gene ID" value="YLR394W"/>
</dbReference>
<dbReference type="GeneID" id="851110"/>
<dbReference type="KEGG" id="sce:YLR394W"/>
<dbReference type="AGR" id="SGD:S000004386"/>
<dbReference type="SGD" id="S000004386">
    <property type="gene designation" value="CST9"/>
</dbReference>
<dbReference type="VEuPathDB" id="FungiDB:YLR394W"/>
<dbReference type="eggNOG" id="KOG4739">
    <property type="taxonomic scope" value="Eukaryota"/>
</dbReference>
<dbReference type="HOGENOM" id="CLU_051887_0_0_1"/>
<dbReference type="InParanoid" id="Q06032"/>
<dbReference type="OMA" id="AHILCSQ"/>
<dbReference type="OrthoDB" id="2535391at2759"/>
<dbReference type="BioCyc" id="YEAST:G3O-32459-MONOMER"/>
<dbReference type="BioGRID-ORCS" id="851110">
    <property type="hits" value="0 hits in 10 CRISPR screens"/>
</dbReference>
<dbReference type="PRO" id="PR:Q06032"/>
<dbReference type="Proteomes" id="UP000002311">
    <property type="component" value="Chromosome XII"/>
</dbReference>
<dbReference type="RNAct" id="Q06032">
    <property type="molecule type" value="protein"/>
</dbReference>
<dbReference type="GO" id="GO:0000775">
    <property type="term" value="C:chromosome, centromeric region"/>
    <property type="evidence" value="ECO:0000314"/>
    <property type="project" value="SGD"/>
</dbReference>
<dbReference type="GO" id="GO:0000794">
    <property type="term" value="C:condensed nuclear chromosome"/>
    <property type="evidence" value="ECO:0000314"/>
    <property type="project" value="SGD"/>
</dbReference>
<dbReference type="GO" id="GO:0000228">
    <property type="term" value="C:nuclear chromosome"/>
    <property type="evidence" value="ECO:0000314"/>
    <property type="project" value="SGD"/>
</dbReference>
<dbReference type="GO" id="GO:0035861">
    <property type="term" value="C:site of double-strand break"/>
    <property type="evidence" value="ECO:0000314"/>
    <property type="project" value="SGD"/>
</dbReference>
<dbReference type="GO" id="GO:0106069">
    <property type="term" value="C:synapsis initiation complex"/>
    <property type="evidence" value="ECO:0000303"/>
    <property type="project" value="ComplexPortal"/>
</dbReference>
<dbReference type="GO" id="GO:0000795">
    <property type="term" value="C:synaptonemal complex"/>
    <property type="evidence" value="ECO:0000318"/>
    <property type="project" value="GO_Central"/>
</dbReference>
<dbReference type="GO" id="GO:0003682">
    <property type="term" value="F:chromatin binding"/>
    <property type="evidence" value="ECO:0000314"/>
    <property type="project" value="SGD"/>
</dbReference>
<dbReference type="GO" id="GO:0019789">
    <property type="term" value="F:SUMO transferase activity"/>
    <property type="evidence" value="ECO:0000314"/>
    <property type="project" value="SGD"/>
</dbReference>
<dbReference type="GO" id="GO:0000724">
    <property type="term" value="P:double-strand break repair via homologous recombination"/>
    <property type="evidence" value="ECO:0000314"/>
    <property type="project" value="SGD"/>
</dbReference>
<dbReference type="GO" id="GO:0007129">
    <property type="term" value="P:homologous chromosome pairing at meiosis"/>
    <property type="evidence" value="ECO:0000315"/>
    <property type="project" value="SGD"/>
</dbReference>
<dbReference type="GO" id="GO:0035825">
    <property type="term" value="P:homologous recombination"/>
    <property type="evidence" value="ECO:0000303"/>
    <property type="project" value="ComplexPortal"/>
</dbReference>
<dbReference type="GO" id="GO:0016925">
    <property type="term" value="P:protein sumoylation"/>
    <property type="evidence" value="ECO:0000314"/>
    <property type="project" value="SGD"/>
</dbReference>
<dbReference type="GO" id="GO:0007131">
    <property type="term" value="P:reciprocal meiotic recombination"/>
    <property type="evidence" value="ECO:0000315"/>
    <property type="project" value="SGD"/>
</dbReference>
<dbReference type="GO" id="GO:0090173">
    <property type="term" value="P:regulation of synaptonemal complex assembly"/>
    <property type="evidence" value="ECO:0000303"/>
    <property type="project" value="ComplexPortal"/>
</dbReference>
<dbReference type="GO" id="GO:0007130">
    <property type="term" value="P:synaptonemal complex assembly"/>
    <property type="evidence" value="ECO:0000315"/>
    <property type="project" value="SGD"/>
</dbReference>
<dbReference type="InterPro" id="IPR042123">
    <property type="entry name" value="Zip3/RNF212-like"/>
</dbReference>
<dbReference type="PANTHER" id="PTHR22663">
    <property type="entry name" value="RING FINGER PROTEIN NARYA-RELATED"/>
    <property type="match status" value="1"/>
</dbReference>
<dbReference type="PANTHER" id="PTHR22663:SF17">
    <property type="entry name" value="RING FINGER PROTEIN NARYA-RELATED"/>
    <property type="match status" value="1"/>
</dbReference>
<dbReference type="SUPFAM" id="SSF57850">
    <property type="entry name" value="RING/U-box"/>
    <property type="match status" value="1"/>
</dbReference>
<protein>
    <recommendedName>
        <fullName>Chromosome stability protein 9</fullName>
    </recommendedName>
    <alternativeName>
        <fullName>Molecular zipper protein 3</fullName>
    </alternativeName>
</protein>
<accession>Q06032</accession>
<accession>D6VZ29</accession>
<reference key="1">
    <citation type="journal article" date="1997" name="Nature">
        <title>The nucleotide sequence of Saccharomyces cerevisiae chromosome XII.</title>
        <authorList>
            <person name="Johnston M."/>
            <person name="Hillier L.W."/>
            <person name="Riles L."/>
            <person name="Albermann K."/>
            <person name="Andre B."/>
            <person name="Ansorge W."/>
            <person name="Benes V."/>
            <person name="Brueckner M."/>
            <person name="Delius H."/>
            <person name="Dubois E."/>
            <person name="Duesterhoeft A."/>
            <person name="Entian K.-D."/>
            <person name="Floeth M."/>
            <person name="Goffeau A."/>
            <person name="Hebling U."/>
            <person name="Heumann K."/>
            <person name="Heuss-Neitzel D."/>
            <person name="Hilbert H."/>
            <person name="Hilger F."/>
            <person name="Kleine K."/>
            <person name="Koetter P."/>
            <person name="Louis E.J."/>
            <person name="Messenguy F."/>
            <person name="Mewes H.-W."/>
            <person name="Miosga T."/>
            <person name="Moestl D."/>
            <person name="Mueller-Auer S."/>
            <person name="Nentwich U."/>
            <person name="Obermaier B."/>
            <person name="Piravandi E."/>
            <person name="Pohl T.M."/>
            <person name="Portetelle D."/>
            <person name="Purnelle B."/>
            <person name="Rechmann S."/>
            <person name="Rieger M."/>
            <person name="Rinke M."/>
            <person name="Rose M."/>
            <person name="Scharfe M."/>
            <person name="Scherens B."/>
            <person name="Scholler P."/>
            <person name="Schwager C."/>
            <person name="Schwarz S."/>
            <person name="Underwood A.P."/>
            <person name="Urrestarazu L.A."/>
            <person name="Vandenbol M."/>
            <person name="Verhasselt P."/>
            <person name="Vierendeels F."/>
            <person name="Voet M."/>
            <person name="Volckaert G."/>
            <person name="Voss H."/>
            <person name="Wambutt R."/>
            <person name="Wedler E."/>
            <person name="Wedler H."/>
            <person name="Zimmermann F.K."/>
            <person name="Zollner A."/>
            <person name="Hani J."/>
            <person name="Hoheisel J.D."/>
        </authorList>
    </citation>
    <scope>NUCLEOTIDE SEQUENCE [LARGE SCALE GENOMIC DNA]</scope>
    <source>
        <strain>ATCC 204508 / S288c</strain>
    </source>
</reference>
<reference key="2">
    <citation type="journal article" date="2014" name="G3 (Bethesda)">
        <title>The reference genome sequence of Saccharomyces cerevisiae: Then and now.</title>
        <authorList>
            <person name="Engel S.R."/>
            <person name="Dietrich F.S."/>
            <person name="Fisk D.G."/>
            <person name="Binkley G."/>
            <person name="Balakrishnan R."/>
            <person name="Costanzo M.C."/>
            <person name="Dwight S.S."/>
            <person name="Hitz B.C."/>
            <person name="Karra K."/>
            <person name="Nash R.S."/>
            <person name="Weng S."/>
            <person name="Wong E.D."/>
            <person name="Lloyd P."/>
            <person name="Skrzypek M.S."/>
            <person name="Miyasato S.R."/>
            <person name="Simison M."/>
            <person name="Cherry J.M."/>
        </authorList>
    </citation>
    <scope>GENOME REANNOTATION</scope>
    <source>
        <strain>ATCC 204508 / S288c</strain>
    </source>
</reference>
<reference key="3">
    <citation type="journal article" date="1999" name="Nucleic Acids Res.">
        <title>New yeast genes important for chromosome integrity and segregation identified by dosage effects on genome stability.</title>
        <authorList>
            <person name="Ouspenski I.I."/>
            <person name="Elledge S.J."/>
            <person name="Brinkley B.R."/>
        </authorList>
    </citation>
    <scope>FUNCTION</scope>
</reference>
<reference key="4">
    <citation type="journal article" date="2000" name="Cell">
        <title>Zip3 provides a link between recombination enzymes and synaptonemal complex proteins.</title>
        <authorList>
            <person name="Agarwal S."/>
            <person name="Roeder G.S."/>
        </authorList>
    </citation>
    <scope>FUNCTION</scope>
    <scope>INDUCTION</scope>
    <scope>SUBCELLULAR LOCATION</scope>
    <scope>IDENTIFICATION IN THE SIC COMPLEX</scope>
    <scope>INTERACTION WITH ZIP1; MRE11; RAD51 AND RAD57</scope>
</reference>
<reference key="5">
    <citation type="journal article" date="2004" name="Cell">
        <title>Imposition of crossover interference through the nonrandom distribution of synapsis initiation complexes.</title>
        <authorList>
            <person name="Fung J.C."/>
            <person name="Rockmill B."/>
            <person name="Odell M."/>
            <person name="Roeder G.S."/>
        </authorList>
    </citation>
    <scope>FUNCTION OF THE SIC COMPLEX</scope>
    <scope>SUBCELLULAR LOCATION</scope>
</reference>
<reference key="6">
    <citation type="journal article" date="2004" name="Proc. Natl. Acad. Sci. U.S.A.">
        <title>Tying synaptonemal complex initiation to the formation and programmed repair of DNA double-strand breaks.</title>
        <authorList>
            <person name="Henderson K.A."/>
            <person name="Keeney S."/>
        </authorList>
    </citation>
    <scope>FUNCTION OF THE SIC COMPLEX</scope>
</reference>
<reference key="7">
    <citation type="journal article" date="2005" name="Genes Dev.">
        <title>Multiple branches of the meiotic recombination pathway contribute independently to homolog pairing and stable juxtaposition during meiosis in budding yeast.</title>
        <authorList>
            <person name="Peoples-Holst T.L."/>
            <person name="Burgess S.M."/>
        </authorList>
    </citation>
    <scope>FUNCTION OF THE SIC COMPLEX</scope>
</reference>
<comment type="function">
    <text evidence="2 3 4 5 6">Component of the synapsis initiation complex (SIC) necessary for the synaptonemal complex assembly. Stabilizes the ZIP2 component to the chromosomes. The SIC complex loads onto chromosomes and nucleates ZIP1 polymerization, a molecular zipper that acts to bring homologous chromosomes in close apposition, which is required for meiotic crossover. May also be involved in double strand break repair.</text>
</comment>
<comment type="subunit">
    <text evidence="3">Component of the synapsis initiation complex composed of at least ZIP2, ZIP3, MSH4 and MSH5. Also interacts with ZIP1, MRE11, RAD51 and RAD53.</text>
</comment>
<comment type="interaction">
    <interactant intactId="EBI-30044">
        <id>Q06032</id>
    </interactant>
    <interactant intactId="EBI-14744">
        <id>P25301</id>
        <label>RAD57</label>
    </interactant>
    <organismsDiffer>false</organismsDiffer>
    <experiments>2</experiments>
</comment>
<comment type="interaction">
    <interactant intactId="EBI-30044">
        <id>Q06032</id>
    </interactant>
    <interactant intactId="EBI-29645">
        <id>P31111</id>
        <label>ZIP1</label>
    </interactant>
    <organismsDiffer>false</organismsDiffer>
    <experiments>3</experiments>
</comment>
<comment type="subcellular location">
    <subcellularLocation>
        <location>Nucleus</location>
    </subcellularLocation>
    <subcellularLocation>
        <location>Chromosome</location>
    </subcellularLocation>
    <text>Synapsed meiotic chromosomes.</text>
</comment>
<comment type="induction">
    <text evidence="3">Expressed during meiosis.</text>
</comment>
<feature type="chain" id="PRO_0000232995" description="Chromosome stability protein 9">
    <location>
        <begin position="1"/>
        <end position="482"/>
    </location>
</feature>
<feature type="region of interest" description="Disordered" evidence="1">
    <location>
        <begin position="239"/>
        <end position="263"/>
    </location>
</feature>
<feature type="region of interest" description="Disordered" evidence="1">
    <location>
        <begin position="418"/>
        <end position="482"/>
    </location>
</feature>
<feature type="compositionally biased region" description="Low complexity" evidence="1">
    <location>
        <begin position="240"/>
        <end position="249"/>
    </location>
</feature>
<feature type="compositionally biased region" description="Polar residues" evidence="1">
    <location>
        <begin position="250"/>
        <end position="263"/>
    </location>
</feature>
<feature type="compositionally biased region" description="Low complexity" evidence="1">
    <location>
        <begin position="418"/>
        <end position="437"/>
    </location>
</feature>
<feature type="compositionally biased region" description="Polar residues" evidence="1">
    <location>
        <begin position="440"/>
        <end position="453"/>
    </location>
</feature>
<feature type="compositionally biased region" description="Polar residues" evidence="1">
    <location>
        <begin position="463"/>
        <end position="473"/>
    </location>
</feature>
<gene>
    <name type="primary">CST9</name>
    <name type="synonym">ZIP3</name>
    <name type="ordered locus">YLR394W</name>
</gene>
<name>CST9_YEAST</name>
<organism>
    <name type="scientific">Saccharomyces cerevisiae (strain ATCC 204508 / S288c)</name>
    <name type="common">Baker's yeast</name>
    <dbReference type="NCBI Taxonomy" id="559292"/>
    <lineage>
        <taxon>Eukaryota</taxon>
        <taxon>Fungi</taxon>
        <taxon>Dikarya</taxon>
        <taxon>Ascomycota</taxon>
        <taxon>Saccharomycotina</taxon>
        <taxon>Saccharomycetes</taxon>
        <taxon>Saccharomycetales</taxon>
        <taxon>Saccharomycetaceae</taxon>
        <taxon>Saccharomyces</taxon>
    </lineage>
</organism>
<sequence length="482" mass="53863">MGGYLAIVFIPQTNTKSMREKKQKCLKQVRRLSLISPKKYIMPDSIFEQPFVYCGVCHRRTSHGDPLRLTSCAHILCSQHSPLTSKVCPICRSSDISIINLVESKQLPTDIRIFFEPLPPLLESLYNVSQFQLNGLSKQCQYYQNHCLKLREKCARQQQLLYQAKIELDSMAILKKRIQELESVLNHNNVSSMSVGVLPTRNSHQNHYQPPPTVDLTVDDNSLEEFEAKSFIKKLKKNSSLRNSSKNNNGTVTPSTSGRVNKNQPLFMETLNNPNRNSIPPPGMNPNANSNLPNISTIAESTNLNRFSFSPVRVAKGFDGKLPNLDILTNNGSVSSKNISRLSSASLQPSSPLSSSSNRLILPNSNLKELHHSNTPLTSTSTQFPSALEKLKITRKRNNTISGSNRITHNLSSHVRSSGLAFSSSSNSLQQSKLPKSNILKRSNSTQQLTNTHLKSDNHLPPRSSNTVLGSSKKNNKFRRIR</sequence>
<keyword id="KW-0158">Chromosome</keyword>
<keyword id="KW-0227">DNA damage</keyword>
<keyword id="KW-0234">DNA repair</keyword>
<keyword id="KW-0469">Meiosis</keyword>
<keyword id="KW-0539">Nucleus</keyword>
<keyword id="KW-1185">Reference proteome</keyword>